<accession>B0U079</accession>
<protein>
    <recommendedName>
        <fullName evidence="1">Small ribosomal subunit protein bS6</fullName>
    </recommendedName>
    <alternativeName>
        <fullName evidence="2">30S ribosomal protein S6</fullName>
    </alternativeName>
</protein>
<organism>
    <name type="scientific">Francisella philomiragia subsp. philomiragia (strain ATCC 25017 / CCUG 19701 / FSC 153 / O#319-036)</name>
    <dbReference type="NCBI Taxonomy" id="484022"/>
    <lineage>
        <taxon>Bacteria</taxon>
        <taxon>Pseudomonadati</taxon>
        <taxon>Pseudomonadota</taxon>
        <taxon>Gammaproteobacteria</taxon>
        <taxon>Thiotrichales</taxon>
        <taxon>Francisellaceae</taxon>
        <taxon>Francisella</taxon>
    </lineage>
</organism>
<reference key="1">
    <citation type="submission" date="2007-12" db="EMBL/GenBank/DDBJ databases">
        <title>Complete sequence of chromosome of Francisella philomiragia subsp. philomiragia ATCC 25017.</title>
        <authorList>
            <consortium name="US DOE Joint Genome Institute"/>
            <person name="Copeland A."/>
            <person name="Lucas S."/>
            <person name="Lapidus A."/>
            <person name="Barry K."/>
            <person name="Detter J.C."/>
            <person name="Glavina del Rio T."/>
            <person name="Hammon N."/>
            <person name="Israni S."/>
            <person name="Dalin E."/>
            <person name="Tice H."/>
            <person name="Pitluck S."/>
            <person name="Chain P."/>
            <person name="Malfatti S."/>
            <person name="Shin M."/>
            <person name="Vergez L."/>
            <person name="Schmutz J."/>
            <person name="Larimer F."/>
            <person name="Land M."/>
            <person name="Hauser L."/>
            <person name="Richardson P."/>
        </authorList>
    </citation>
    <scope>NUCLEOTIDE SEQUENCE [LARGE SCALE GENOMIC DNA]</scope>
    <source>
        <strain>ATCC 25017 / CCUG 19701 / FSC 153 / O#319-036</strain>
    </source>
</reference>
<sequence length="111" mass="13156">MKHYEIVLMIHPDQSEQLDAMLSKYRGIIEEKGGKIHRFEDWGRRQLAYPIEKLHKAHYVLFNVECDVESLEKLQENLKYNDAVLRRLVISKKEAVTEPSIMMETNEKEVI</sequence>
<proteinExistence type="inferred from homology"/>
<name>RS6_FRAP2</name>
<dbReference type="EMBL" id="CP000937">
    <property type="protein sequence ID" value="ABZ87909.1"/>
    <property type="molecule type" value="Genomic_DNA"/>
</dbReference>
<dbReference type="SMR" id="B0U079"/>
<dbReference type="KEGG" id="fph:Fphi_1684"/>
<dbReference type="eggNOG" id="COG0360">
    <property type="taxonomic scope" value="Bacteria"/>
</dbReference>
<dbReference type="HOGENOM" id="CLU_113441_6_1_6"/>
<dbReference type="GO" id="GO:0022627">
    <property type="term" value="C:cytosolic small ribosomal subunit"/>
    <property type="evidence" value="ECO:0007669"/>
    <property type="project" value="TreeGrafter"/>
</dbReference>
<dbReference type="GO" id="GO:0070181">
    <property type="term" value="F:small ribosomal subunit rRNA binding"/>
    <property type="evidence" value="ECO:0007669"/>
    <property type="project" value="TreeGrafter"/>
</dbReference>
<dbReference type="GO" id="GO:0003735">
    <property type="term" value="F:structural constituent of ribosome"/>
    <property type="evidence" value="ECO:0007669"/>
    <property type="project" value="InterPro"/>
</dbReference>
<dbReference type="GO" id="GO:0006412">
    <property type="term" value="P:translation"/>
    <property type="evidence" value="ECO:0007669"/>
    <property type="project" value="UniProtKB-UniRule"/>
</dbReference>
<dbReference type="CDD" id="cd00473">
    <property type="entry name" value="bS6"/>
    <property type="match status" value="1"/>
</dbReference>
<dbReference type="Gene3D" id="3.30.70.60">
    <property type="match status" value="1"/>
</dbReference>
<dbReference type="HAMAP" id="MF_00360">
    <property type="entry name" value="Ribosomal_bS6"/>
    <property type="match status" value="1"/>
</dbReference>
<dbReference type="InterPro" id="IPR000529">
    <property type="entry name" value="Ribosomal_bS6"/>
</dbReference>
<dbReference type="InterPro" id="IPR035980">
    <property type="entry name" value="Ribosomal_bS6_sf"/>
</dbReference>
<dbReference type="InterPro" id="IPR020814">
    <property type="entry name" value="Ribosomal_S6_plastid/chlpt"/>
</dbReference>
<dbReference type="InterPro" id="IPR014717">
    <property type="entry name" value="Transl_elong_EF1B/ribsomal_bS6"/>
</dbReference>
<dbReference type="NCBIfam" id="TIGR00166">
    <property type="entry name" value="S6"/>
    <property type="match status" value="1"/>
</dbReference>
<dbReference type="PANTHER" id="PTHR21011">
    <property type="entry name" value="MITOCHONDRIAL 28S RIBOSOMAL PROTEIN S6"/>
    <property type="match status" value="1"/>
</dbReference>
<dbReference type="PANTHER" id="PTHR21011:SF1">
    <property type="entry name" value="SMALL RIBOSOMAL SUBUNIT PROTEIN BS6M"/>
    <property type="match status" value="1"/>
</dbReference>
<dbReference type="Pfam" id="PF01250">
    <property type="entry name" value="Ribosomal_S6"/>
    <property type="match status" value="1"/>
</dbReference>
<dbReference type="SUPFAM" id="SSF54995">
    <property type="entry name" value="Ribosomal protein S6"/>
    <property type="match status" value="1"/>
</dbReference>
<comment type="function">
    <text evidence="1">Binds together with bS18 to 16S ribosomal RNA.</text>
</comment>
<comment type="similarity">
    <text evidence="1">Belongs to the bacterial ribosomal protein bS6 family.</text>
</comment>
<evidence type="ECO:0000255" key="1">
    <source>
        <dbReference type="HAMAP-Rule" id="MF_00360"/>
    </source>
</evidence>
<evidence type="ECO:0000305" key="2"/>
<gene>
    <name evidence="1" type="primary">rpsF</name>
    <name type="ordered locus">Fphi_1684</name>
</gene>
<feature type="chain" id="PRO_1000079447" description="Small ribosomal subunit protein bS6">
    <location>
        <begin position="1"/>
        <end position="111"/>
    </location>
</feature>
<keyword id="KW-0687">Ribonucleoprotein</keyword>
<keyword id="KW-0689">Ribosomal protein</keyword>
<keyword id="KW-0694">RNA-binding</keyword>
<keyword id="KW-0699">rRNA-binding</keyword>